<name>RL20_BIFLS</name>
<sequence>MARVKRAVNAHKKRRVVLERASGYRGQRSRLYRKAKEQLLHSFNYNFRDRKARKGDFRKLWIQRINAAVRAEGITYNRFIQGLRLAGIELDRRALAEIAVSDPNTFKTIVDAAKAALPEDVNAPVEA</sequence>
<proteinExistence type="inferred from homology"/>
<keyword id="KW-0687">Ribonucleoprotein</keyword>
<keyword id="KW-0689">Ribosomal protein</keyword>
<keyword id="KW-0694">RNA-binding</keyword>
<keyword id="KW-0699">rRNA-binding</keyword>
<dbReference type="EMBL" id="CP001095">
    <property type="protein sequence ID" value="ACJ52004.1"/>
    <property type="molecule type" value="Genomic_DNA"/>
</dbReference>
<dbReference type="EMBL" id="AP010889">
    <property type="protein sequence ID" value="BAJ68511.1"/>
    <property type="molecule type" value="Genomic_DNA"/>
</dbReference>
<dbReference type="RefSeq" id="WP_011068013.1">
    <property type="nucleotide sequence ID" value="NZ_JDTT01000006.1"/>
</dbReference>
<dbReference type="SMR" id="B7GQC4"/>
<dbReference type="KEGG" id="bln:Blon_0904"/>
<dbReference type="KEGG" id="blon:BLIJ_0921"/>
<dbReference type="PATRIC" id="fig|391904.8.peg.931"/>
<dbReference type="HOGENOM" id="CLU_123265_0_0_11"/>
<dbReference type="Proteomes" id="UP000001360">
    <property type="component" value="Chromosome"/>
</dbReference>
<dbReference type="GO" id="GO:1990904">
    <property type="term" value="C:ribonucleoprotein complex"/>
    <property type="evidence" value="ECO:0007669"/>
    <property type="project" value="UniProtKB-KW"/>
</dbReference>
<dbReference type="GO" id="GO:0005840">
    <property type="term" value="C:ribosome"/>
    <property type="evidence" value="ECO:0007669"/>
    <property type="project" value="UniProtKB-KW"/>
</dbReference>
<dbReference type="GO" id="GO:0019843">
    <property type="term" value="F:rRNA binding"/>
    <property type="evidence" value="ECO:0007669"/>
    <property type="project" value="UniProtKB-UniRule"/>
</dbReference>
<dbReference type="GO" id="GO:0003735">
    <property type="term" value="F:structural constituent of ribosome"/>
    <property type="evidence" value="ECO:0007669"/>
    <property type="project" value="InterPro"/>
</dbReference>
<dbReference type="GO" id="GO:0000027">
    <property type="term" value="P:ribosomal large subunit assembly"/>
    <property type="evidence" value="ECO:0007669"/>
    <property type="project" value="UniProtKB-UniRule"/>
</dbReference>
<dbReference type="GO" id="GO:0006412">
    <property type="term" value="P:translation"/>
    <property type="evidence" value="ECO:0007669"/>
    <property type="project" value="InterPro"/>
</dbReference>
<dbReference type="CDD" id="cd07026">
    <property type="entry name" value="Ribosomal_L20"/>
    <property type="match status" value="1"/>
</dbReference>
<dbReference type="FunFam" id="1.10.1900.20:FF:000001">
    <property type="entry name" value="50S ribosomal protein L20"/>
    <property type="match status" value="1"/>
</dbReference>
<dbReference type="Gene3D" id="6.10.160.10">
    <property type="match status" value="1"/>
</dbReference>
<dbReference type="Gene3D" id="1.10.1900.20">
    <property type="entry name" value="Ribosomal protein L20"/>
    <property type="match status" value="1"/>
</dbReference>
<dbReference type="HAMAP" id="MF_00382">
    <property type="entry name" value="Ribosomal_bL20"/>
    <property type="match status" value="1"/>
</dbReference>
<dbReference type="InterPro" id="IPR005813">
    <property type="entry name" value="Ribosomal_bL20"/>
</dbReference>
<dbReference type="InterPro" id="IPR049946">
    <property type="entry name" value="RIBOSOMAL_L20_CS"/>
</dbReference>
<dbReference type="InterPro" id="IPR035566">
    <property type="entry name" value="Ribosomal_protein_bL20_C"/>
</dbReference>
<dbReference type="NCBIfam" id="TIGR01032">
    <property type="entry name" value="rplT_bact"/>
    <property type="match status" value="1"/>
</dbReference>
<dbReference type="PANTHER" id="PTHR10986">
    <property type="entry name" value="39S RIBOSOMAL PROTEIN L20"/>
    <property type="match status" value="1"/>
</dbReference>
<dbReference type="Pfam" id="PF00453">
    <property type="entry name" value="Ribosomal_L20"/>
    <property type="match status" value="1"/>
</dbReference>
<dbReference type="PRINTS" id="PR00062">
    <property type="entry name" value="RIBOSOMALL20"/>
</dbReference>
<dbReference type="SUPFAM" id="SSF74731">
    <property type="entry name" value="Ribosomal protein L20"/>
    <property type="match status" value="1"/>
</dbReference>
<dbReference type="PROSITE" id="PS00937">
    <property type="entry name" value="RIBOSOMAL_L20"/>
    <property type="match status" value="1"/>
</dbReference>
<organism>
    <name type="scientific">Bifidobacterium longum subsp. infantis (strain ATCC 15697 / DSM 20088 / JCM 1222 / NCTC 11817 / S12)</name>
    <dbReference type="NCBI Taxonomy" id="391904"/>
    <lineage>
        <taxon>Bacteria</taxon>
        <taxon>Bacillati</taxon>
        <taxon>Actinomycetota</taxon>
        <taxon>Actinomycetes</taxon>
        <taxon>Bifidobacteriales</taxon>
        <taxon>Bifidobacteriaceae</taxon>
        <taxon>Bifidobacterium</taxon>
    </lineage>
</organism>
<comment type="function">
    <text evidence="1">Binds directly to 23S ribosomal RNA and is necessary for the in vitro assembly process of the 50S ribosomal subunit. It is not involved in the protein synthesizing functions of that subunit.</text>
</comment>
<comment type="similarity">
    <text evidence="1">Belongs to the bacterial ribosomal protein bL20 family.</text>
</comment>
<gene>
    <name evidence="1" type="primary">rplT</name>
    <name type="ordered locus">Blon_0904</name>
    <name type="ordered locus">BLIJ_0921</name>
</gene>
<protein>
    <recommendedName>
        <fullName evidence="1">Large ribosomal subunit protein bL20</fullName>
    </recommendedName>
    <alternativeName>
        <fullName evidence="2">50S ribosomal protein L20</fullName>
    </alternativeName>
</protein>
<feature type="chain" id="PRO_1000193939" description="Large ribosomal subunit protein bL20">
    <location>
        <begin position="1"/>
        <end position="127"/>
    </location>
</feature>
<evidence type="ECO:0000255" key="1">
    <source>
        <dbReference type="HAMAP-Rule" id="MF_00382"/>
    </source>
</evidence>
<evidence type="ECO:0000305" key="2"/>
<accession>B7GQC4</accession>
<accession>E8MR86</accession>
<reference key="1">
    <citation type="journal article" date="2008" name="Proc. Natl. Acad. Sci. U.S.A.">
        <title>The genome sequence of Bifidobacterium longum subsp. infantis reveals adaptations for milk utilization within the infant microbiome.</title>
        <authorList>
            <person name="Sela D.A."/>
            <person name="Chapman J."/>
            <person name="Adeuya A."/>
            <person name="Kim J.H."/>
            <person name="Chen F."/>
            <person name="Whitehead T.R."/>
            <person name="Lapidus A."/>
            <person name="Rokhsar D.S."/>
            <person name="Lebrilla C.B."/>
            <person name="German J.B."/>
            <person name="Price N.P."/>
            <person name="Richardson P.M."/>
            <person name="Mills D.A."/>
        </authorList>
    </citation>
    <scope>NUCLEOTIDE SEQUENCE [LARGE SCALE GENOMIC DNA]</scope>
    <source>
        <strain>ATCC 15697 / DSM 20088 / JCM 1222 / NCTC 11817 / S12</strain>
    </source>
</reference>
<reference key="2">
    <citation type="journal article" date="2011" name="Nature">
        <title>Bifidobacteria can protect from enteropathogenic infection through production of acetate.</title>
        <authorList>
            <person name="Fukuda S."/>
            <person name="Toh H."/>
            <person name="Hase K."/>
            <person name="Oshima K."/>
            <person name="Nakanishi Y."/>
            <person name="Yoshimura K."/>
            <person name="Tobe T."/>
            <person name="Clarke J.M."/>
            <person name="Topping D.L."/>
            <person name="Suzuki T."/>
            <person name="Taylor T.D."/>
            <person name="Itoh K."/>
            <person name="Kikuchi J."/>
            <person name="Morita H."/>
            <person name="Hattori M."/>
            <person name="Ohno H."/>
        </authorList>
    </citation>
    <scope>NUCLEOTIDE SEQUENCE [LARGE SCALE GENOMIC DNA]</scope>
    <source>
        <strain>ATCC 15697 / DSM 20088 / JCM 1222 / NCTC 11817 / S12</strain>
    </source>
</reference>